<name>SECA_BRUMB</name>
<organism>
    <name type="scientific">Brucella melitensis biotype 2 (strain ATCC 23457)</name>
    <dbReference type="NCBI Taxonomy" id="546272"/>
    <lineage>
        <taxon>Bacteria</taxon>
        <taxon>Pseudomonadati</taxon>
        <taxon>Pseudomonadota</taxon>
        <taxon>Alphaproteobacteria</taxon>
        <taxon>Hyphomicrobiales</taxon>
        <taxon>Brucellaceae</taxon>
        <taxon>Brucella/Ochrobactrum group</taxon>
        <taxon>Brucella</taxon>
    </lineage>
</organism>
<keyword id="KW-0067">ATP-binding</keyword>
<keyword id="KW-0997">Cell inner membrane</keyword>
<keyword id="KW-1003">Cell membrane</keyword>
<keyword id="KW-0963">Cytoplasm</keyword>
<keyword id="KW-0472">Membrane</keyword>
<keyword id="KW-0479">Metal-binding</keyword>
<keyword id="KW-0547">Nucleotide-binding</keyword>
<keyword id="KW-0653">Protein transport</keyword>
<keyword id="KW-1278">Translocase</keyword>
<keyword id="KW-0811">Translocation</keyword>
<keyword id="KW-0813">Transport</keyword>
<keyword id="KW-0862">Zinc</keyword>
<accession>C0RFJ0</accession>
<dbReference type="EC" id="7.4.2.8" evidence="1"/>
<dbReference type="EMBL" id="CP001488">
    <property type="protein sequence ID" value="ACO01662.1"/>
    <property type="molecule type" value="Genomic_DNA"/>
</dbReference>
<dbReference type="RefSeq" id="WP_002965012.1">
    <property type="nucleotide sequence ID" value="NC_012441.1"/>
</dbReference>
<dbReference type="SMR" id="C0RFJ0"/>
<dbReference type="GeneID" id="93017729"/>
<dbReference type="KEGG" id="bmi:BMEA_A2002"/>
<dbReference type="HOGENOM" id="CLU_005314_3_0_5"/>
<dbReference type="Proteomes" id="UP000001748">
    <property type="component" value="Chromosome I"/>
</dbReference>
<dbReference type="GO" id="GO:0031522">
    <property type="term" value="C:cell envelope Sec protein transport complex"/>
    <property type="evidence" value="ECO:0007669"/>
    <property type="project" value="TreeGrafter"/>
</dbReference>
<dbReference type="GO" id="GO:0005829">
    <property type="term" value="C:cytosol"/>
    <property type="evidence" value="ECO:0007669"/>
    <property type="project" value="TreeGrafter"/>
</dbReference>
<dbReference type="GO" id="GO:0005886">
    <property type="term" value="C:plasma membrane"/>
    <property type="evidence" value="ECO:0007669"/>
    <property type="project" value="UniProtKB-SubCell"/>
</dbReference>
<dbReference type="GO" id="GO:0005524">
    <property type="term" value="F:ATP binding"/>
    <property type="evidence" value="ECO:0007669"/>
    <property type="project" value="UniProtKB-UniRule"/>
</dbReference>
<dbReference type="GO" id="GO:0046872">
    <property type="term" value="F:metal ion binding"/>
    <property type="evidence" value="ECO:0007669"/>
    <property type="project" value="UniProtKB-KW"/>
</dbReference>
<dbReference type="GO" id="GO:0008564">
    <property type="term" value="F:protein-exporting ATPase activity"/>
    <property type="evidence" value="ECO:0007669"/>
    <property type="project" value="UniProtKB-EC"/>
</dbReference>
<dbReference type="GO" id="GO:0065002">
    <property type="term" value="P:intracellular protein transmembrane transport"/>
    <property type="evidence" value="ECO:0007669"/>
    <property type="project" value="UniProtKB-UniRule"/>
</dbReference>
<dbReference type="GO" id="GO:0017038">
    <property type="term" value="P:protein import"/>
    <property type="evidence" value="ECO:0007669"/>
    <property type="project" value="InterPro"/>
</dbReference>
<dbReference type="GO" id="GO:0006605">
    <property type="term" value="P:protein targeting"/>
    <property type="evidence" value="ECO:0007669"/>
    <property type="project" value="UniProtKB-UniRule"/>
</dbReference>
<dbReference type="GO" id="GO:0043952">
    <property type="term" value="P:protein transport by the Sec complex"/>
    <property type="evidence" value="ECO:0007669"/>
    <property type="project" value="TreeGrafter"/>
</dbReference>
<dbReference type="CDD" id="cd17928">
    <property type="entry name" value="DEXDc_SecA"/>
    <property type="match status" value="1"/>
</dbReference>
<dbReference type="CDD" id="cd18803">
    <property type="entry name" value="SF2_C_secA"/>
    <property type="match status" value="1"/>
</dbReference>
<dbReference type="FunFam" id="3.90.1440.10:FF:000001">
    <property type="entry name" value="Preprotein translocase subunit SecA"/>
    <property type="match status" value="1"/>
</dbReference>
<dbReference type="FunFam" id="1.10.3060.10:FF:000003">
    <property type="entry name" value="Protein translocase subunit SecA"/>
    <property type="match status" value="1"/>
</dbReference>
<dbReference type="FunFam" id="3.40.50.300:FF:000334">
    <property type="entry name" value="Protein translocase subunit SecA"/>
    <property type="match status" value="1"/>
</dbReference>
<dbReference type="FunFam" id="3.40.50.300:FF:001790">
    <property type="entry name" value="Protein translocase subunit SecA"/>
    <property type="match status" value="1"/>
</dbReference>
<dbReference type="Gene3D" id="3.10.450.50">
    <property type="match status" value="1"/>
</dbReference>
<dbReference type="Gene3D" id="1.10.3060.10">
    <property type="entry name" value="Helical scaffold and wing domains of SecA"/>
    <property type="match status" value="1"/>
</dbReference>
<dbReference type="Gene3D" id="3.40.50.300">
    <property type="entry name" value="P-loop containing nucleotide triphosphate hydrolases"/>
    <property type="match status" value="2"/>
</dbReference>
<dbReference type="Gene3D" id="3.90.1440.10">
    <property type="entry name" value="SecA, preprotein cross-linking domain"/>
    <property type="match status" value="1"/>
</dbReference>
<dbReference type="HAMAP" id="MF_01382">
    <property type="entry name" value="SecA"/>
    <property type="match status" value="1"/>
</dbReference>
<dbReference type="InterPro" id="IPR014001">
    <property type="entry name" value="Helicase_ATP-bd"/>
</dbReference>
<dbReference type="InterPro" id="IPR001650">
    <property type="entry name" value="Helicase_C-like"/>
</dbReference>
<dbReference type="InterPro" id="IPR027417">
    <property type="entry name" value="P-loop_NTPase"/>
</dbReference>
<dbReference type="InterPro" id="IPR004027">
    <property type="entry name" value="SEC_C_motif"/>
</dbReference>
<dbReference type="InterPro" id="IPR000185">
    <property type="entry name" value="SecA"/>
</dbReference>
<dbReference type="InterPro" id="IPR020937">
    <property type="entry name" value="SecA_CS"/>
</dbReference>
<dbReference type="InterPro" id="IPR011115">
    <property type="entry name" value="SecA_DEAD"/>
</dbReference>
<dbReference type="InterPro" id="IPR014018">
    <property type="entry name" value="SecA_motor_DEAD"/>
</dbReference>
<dbReference type="InterPro" id="IPR011130">
    <property type="entry name" value="SecA_preprotein_X-link_dom"/>
</dbReference>
<dbReference type="InterPro" id="IPR044722">
    <property type="entry name" value="SecA_SF2_C"/>
</dbReference>
<dbReference type="InterPro" id="IPR011116">
    <property type="entry name" value="SecA_Wing/Scaffold"/>
</dbReference>
<dbReference type="InterPro" id="IPR036266">
    <property type="entry name" value="SecA_Wing/Scaffold_sf"/>
</dbReference>
<dbReference type="InterPro" id="IPR036670">
    <property type="entry name" value="SecA_X-link_sf"/>
</dbReference>
<dbReference type="NCBIfam" id="NF009538">
    <property type="entry name" value="PRK12904.1"/>
    <property type="match status" value="1"/>
</dbReference>
<dbReference type="NCBIfam" id="TIGR00963">
    <property type="entry name" value="secA"/>
    <property type="match status" value="1"/>
</dbReference>
<dbReference type="PANTHER" id="PTHR30612:SF0">
    <property type="entry name" value="CHLOROPLAST PROTEIN-TRANSPORTING ATPASE"/>
    <property type="match status" value="1"/>
</dbReference>
<dbReference type="PANTHER" id="PTHR30612">
    <property type="entry name" value="SECA INNER MEMBRANE COMPONENT OF SEC PROTEIN SECRETION SYSTEM"/>
    <property type="match status" value="1"/>
</dbReference>
<dbReference type="Pfam" id="PF21090">
    <property type="entry name" value="P-loop_SecA"/>
    <property type="match status" value="1"/>
</dbReference>
<dbReference type="Pfam" id="PF02810">
    <property type="entry name" value="SEC-C"/>
    <property type="match status" value="1"/>
</dbReference>
<dbReference type="Pfam" id="PF07517">
    <property type="entry name" value="SecA_DEAD"/>
    <property type="match status" value="1"/>
</dbReference>
<dbReference type="Pfam" id="PF01043">
    <property type="entry name" value="SecA_PP_bind"/>
    <property type="match status" value="1"/>
</dbReference>
<dbReference type="Pfam" id="PF07516">
    <property type="entry name" value="SecA_SW"/>
    <property type="match status" value="1"/>
</dbReference>
<dbReference type="PRINTS" id="PR00906">
    <property type="entry name" value="SECA"/>
</dbReference>
<dbReference type="SMART" id="SM00957">
    <property type="entry name" value="SecA_DEAD"/>
    <property type="match status" value="1"/>
</dbReference>
<dbReference type="SMART" id="SM00958">
    <property type="entry name" value="SecA_PP_bind"/>
    <property type="match status" value="1"/>
</dbReference>
<dbReference type="SUPFAM" id="SSF81886">
    <property type="entry name" value="Helical scaffold and wing domains of SecA"/>
    <property type="match status" value="1"/>
</dbReference>
<dbReference type="SUPFAM" id="SSF52540">
    <property type="entry name" value="P-loop containing nucleoside triphosphate hydrolases"/>
    <property type="match status" value="2"/>
</dbReference>
<dbReference type="SUPFAM" id="SSF81767">
    <property type="entry name" value="Pre-protein crosslinking domain of SecA"/>
    <property type="match status" value="1"/>
</dbReference>
<dbReference type="PROSITE" id="PS01312">
    <property type="entry name" value="SECA"/>
    <property type="match status" value="1"/>
</dbReference>
<dbReference type="PROSITE" id="PS51196">
    <property type="entry name" value="SECA_MOTOR_DEAD"/>
    <property type="match status" value="1"/>
</dbReference>
<protein>
    <recommendedName>
        <fullName evidence="1">Protein translocase subunit SecA</fullName>
        <ecNumber evidence="1">7.4.2.8</ecNumber>
    </recommendedName>
</protein>
<comment type="function">
    <text evidence="1">Part of the Sec protein translocase complex. Interacts with the SecYEG preprotein conducting channel. Has a central role in coupling the hydrolysis of ATP to the transfer of proteins into and across the cell membrane, serving both as a receptor for the preprotein-SecB complex and as an ATP-driven molecular motor driving the stepwise translocation of polypeptide chains across the membrane.</text>
</comment>
<comment type="catalytic activity">
    <reaction evidence="1">
        <text>ATP + H2O + cellular proteinSide 1 = ADP + phosphate + cellular proteinSide 2.</text>
        <dbReference type="EC" id="7.4.2.8"/>
    </reaction>
</comment>
<comment type="cofactor">
    <cofactor evidence="1">
        <name>Zn(2+)</name>
        <dbReference type="ChEBI" id="CHEBI:29105"/>
    </cofactor>
    <text evidence="1">May bind 1 zinc ion per subunit.</text>
</comment>
<comment type="subunit">
    <text evidence="1">Monomer and homodimer. Part of the essential Sec protein translocation apparatus which comprises SecA, SecYEG and auxiliary proteins SecDF-YajC and YidC.</text>
</comment>
<comment type="subcellular location">
    <subcellularLocation>
        <location evidence="1">Cell inner membrane</location>
        <topology evidence="1">Peripheral membrane protein</topology>
        <orientation evidence="1">Cytoplasmic side</orientation>
    </subcellularLocation>
    <subcellularLocation>
        <location evidence="1">Cytoplasm</location>
    </subcellularLocation>
    <text evidence="1">Distribution is 50-50.</text>
</comment>
<comment type="similarity">
    <text evidence="1">Belongs to the SecA family.</text>
</comment>
<evidence type="ECO:0000255" key="1">
    <source>
        <dbReference type="HAMAP-Rule" id="MF_01382"/>
    </source>
</evidence>
<evidence type="ECO:0000256" key="2">
    <source>
        <dbReference type="SAM" id="MobiDB-lite"/>
    </source>
</evidence>
<sequence>MVSFGGLARKIFGSSNDRRVKTLRQRAEQITALEKNYENLTDEQLQAKTAEFRAALAEGKSLDSLLPDAFATAREAAKRVLGMRPFDVQLIGGMVLHERGIAEMRTGEGKTLMATLPVYLNALEGKGVHVVTVNDYLATRDAETMGRLYNFLGLTVGVIKHGLDDDERRAAYACDITYGTNNELGFDYLRDNMKYERAQMVQRPHNYAIVDEVDSILIDEARTPLIISGPLEDRSDFYNLIDTFIPPLAEEDYEVDEKQKTAIFTEVGTEKVEKLLEAAGHLKGESLYDIENVAVVHHLNNALRAHKLFQRDKDYIVRNDEIVIIDEFTGRMMPGRRYSEGLHQALEAKEHVTIQPENQTLASITFQNYFRMYNKLSGMTGTAATEAEEFGNIYGLEVLEIPTNLPVQRIDEDDEVYRTVEEKYRAIVRDIRASHEKGQPILVGTTSIEKSEQLAERLRREGIKGFQVLNARYHEQEAYIIAQAGVPGAVTIATNMAGRGTDIQLGGNLEMRVRQELSDVPEGPEREEKIAAIKADIAQLKEKALAAGGLYVLATERHESRRIDNQLRGRSGRQGDPGRSKFFLSLQDDLMRIFGSDRMDGMLQKLGLKEDEAIVHPWINKALEKAQKKVEARNFEIRKNLLKYDDVMNDQRKVIFEQRLEMMDEEDLTETVAEMRHEVIEDMVILRIPKDAYAEKWDIAGLKQDIASKLNLDLPVEEWAKEEGIAEEEFENRIKEAADKAAAEKAERFGPQIMTYVEKSVIMQSLDNLWREHLVNLDHLRSVVGFRGYAQRDPLNEYKTEAFELFQTMLANLREVVISQLMRVEIVREAPPEPQLPPMAGLHIDGTTGENDFDEAIWAEHQHDDRIVPPAQRDPADPRTWGKVSRNEPCPCGSGKKYKHCHGAFE</sequence>
<reference key="1">
    <citation type="submission" date="2009-03" db="EMBL/GenBank/DDBJ databases">
        <title>Brucella melitensis ATCC 23457 whole genome shotgun sequencing project.</title>
        <authorList>
            <person name="Setubal J.C."/>
            <person name="Boyle S."/>
            <person name="Crasta O.R."/>
            <person name="Gillespie J.J."/>
            <person name="Kenyon R.W."/>
            <person name="Lu J."/>
            <person name="Mane S."/>
            <person name="Nagrani S."/>
            <person name="Shallom J.M."/>
            <person name="Shallom S."/>
            <person name="Shukla M."/>
            <person name="Snyder E.E."/>
            <person name="Sobral B.W."/>
            <person name="Wattam A.R."/>
            <person name="Will R."/>
            <person name="Williams K."/>
            <person name="Yoo H."/>
            <person name="Munk C."/>
            <person name="Tapia R."/>
            <person name="Han C."/>
            <person name="Detter J.C."/>
            <person name="Bruce D."/>
            <person name="Brettin T.S."/>
        </authorList>
    </citation>
    <scope>NUCLEOTIDE SEQUENCE [LARGE SCALE GENOMIC DNA]</scope>
    <source>
        <strain>ATCC 23457</strain>
    </source>
</reference>
<proteinExistence type="inferred from homology"/>
<gene>
    <name evidence="1" type="primary">secA</name>
    <name type="ordered locus">BMEA_A2002</name>
</gene>
<feature type="chain" id="PRO_1000184218" description="Protein translocase subunit SecA">
    <location>
        <begin position="1"/>
        <end position="906"/>
    </location>
</feature>
<feature type="region of interest" description="Disordered" evidence="2">
    <location>
        <begin position="868"/>
        <end position="887"/>
    </location>
</feature>
<feature type="binding site" evidence="1">
    <location>
        <position position="89"/>
    </location>
    <ligand>
        <name>ATP</name>
        <dbReference type="ChEBI" id="CHEBI:30616"/>
    </ligand>
</feature>
<feature type="binding site" evidence="1">
    <location>
        <begin position="107"/>
        <end position="111"/>
    </location>
    <ligand>
        <name>ATP</name>
        <dbReference type="ChEBI" id="CHEBI:30616"/>
    </ligand>
</feature>
<feature type="binding site" evidence="1">
    <location>
        <position position="502"/>
    </location>
    <ligand>
        <name>ATP</name>
        <dbReference type="ChEBI" id="CHEBI:30616"/>
    </ligand>
</feature>
<feature type="binding site" evidence="1">
    <location>
        <position position="890"/>
    </location>
    <ligand>
        <name>Zn(2+)</name>
        <dbReference type="ChEBI" id="CHEBI:29105"/>
    </ligand>
</feature>
<feature type="binding site" evidence="1">
    <location>
        <position position="892"/>
    </location>
    <ligand>
        <name>Zn(2+)</name>
        <dbReference type="ChEBI" id="CHEBI:29105"/>
    </ligand>
</feature>
<feature type="binding site" evidence="1">
    <location>
        <position position="901"/>
    </location>
    <ligand>
        <name>Zn(2+)</name>
        <dbReference type="ChEBI" id="CHEBI:29105"/>
    </ligand>
</feature>
<feature type="binding site" evidence="1">
    <location>
        <position position="902"/>
    </location>
    <ligand>
        <name>Zn(2+)</name>
        <dbReference type="ChEBI" id="CHEBI:29105"/>
    </ligand>
</feature>